<gene>
    <name type="ordered locus">NGR_a02330</name>
    <name type="ORF">y4nI</name>
</gene>
<accession>P55581</accession>
<feature type="chain" id="PRO_0000200918" description="Uncharacterized protein y4nI">
    <location>
        <begin position="1"/>
        <end position="120"/>
    </location>
</feature>
<feature type="transmembrane region" description="Helical" evidence="1">
    <location>
        <begin position="47"/>
        <end position="63"/>
    </location>
</feature>
<keyword id="KW-0472">Membrane</keyword>
<keyword id="KW-0614">Plasmid</keyword>
<keyword id="KW-1185">Reference proteome</keyword>
<keyword id="KW-0812">Transmembrane</keyword>
<keyword id="KW-1133">Transmembrane helix</keyword>
<evidence type="ECO:0000255" key="1"/>
<evidence type="ECO:0000305" key="2"/>
<protein>
    <recommendedName>
        <fullName>Uncharacterized protein y4nI</fullName>
    </recommendedName>
</protein>
<comment type="subcellular location">
    <subcellularLocation>
        <location evidence="2">Membrane</location>
        <topology evidence="2">Single-pass membrane protein</topology>
    </subcellularLocation>
</comment>
<name>Y4NI_SINFN</name>
<sequence>MIVATLTPLWPLLDAEERPAVVSEVARSVTRSIALAPFHIRFAVESVSIVIGLCTVLISAGAGGPLARTLRTDRFYRLLQRMPGPAGSVIRLYRSMTLLAFYDEAPVAEKLLAARPAQTS</sequence>
<dbReference type="EMBL" id="U00090">
    <property type="protein sequence ID" value="AAB91788.1"/>
    <property type="molecule type" value="Genomic_DNA"/>
</dbReference>
<dbReference type="RefSeq" id="NP_443992.1">
    <property type="nucleotide sequence ID" value="NC_000914.2"/>
</dbReference>
<dbReference type="KEGG" id="rhi:NGR_a02330"/>
<dbReference type="eggNOG" id="ENOG5030PE4">
    <property type="taxonomic scope" value="Bacteria"/>
</dbReference>
<dbReference type="HOGENOM" id="CLU_2047845_0_0_5"/>
<dbReference type="OrthoDB" id="8280083at2"/>
<dbReference type="Proteomes" id="UP000001054">
    <property type="component" value="Plasmid pNGR234a"/>
</dbReference>
<dbReference type="GO" id="GO:0016020">
    <property type="term" value="C:membrane"/>
    <property type="evidence" value="ECO:0007669"/>
    <property type="project" value="UniProtKB-SubCell"/>
</dbReference>
<geneLocation type="plasmid">
    <name>sym pNGR234a</name>
</geneLocation>
<reference key="1">
    <citation type="journal article" date="1997" name="Nature">
        <title>Molecular basis of symbiosis between Rhizobium and legumes.</title>
        <authorList>
            <person name="Freiberg C.A."/>
            <person name="Fellay R."/>
            <person name="Bairoch A."/>
            <person name="Broughton W.J."/>
            <person name="Rosenthal A."/>
            <person name="Perret X."/>
        </authorList>
    </citation>
    <scope>NUCLEOTIDE SEQUENCE [LARGE SCALE GENOMIC DNA]</scope>
    <source>
        <strain>NBRC 101917 / NGR234</strain>
    </source>
</reference>
<reference key="2">
    <citation type="journal article" date="2009" name="Appl. Environ. Microbiol.">
        <title>Rhizobium sp. strain NGR234 possesses a remarkable number of secretion systems.</title>
        <authorList>
            <person name="Schmeisser C."/>
            <person name="Liesegang H."/>
            <person name="Krysciak D."/>
            <person name="Bakkou N."/>
            <person name="Le Quere A."/>
            <person name="Wollherr A."/>
            <person name="Heinemeyer I."/>
            <person name="Morgenstern B."/>
            <person name="Pommerening-Roeser A."/>
            <person name="Flores M."/>
            <person name="Palacios R."/>
            <person name="Brenner S."/>
            <person name="Gottschalk G."/>
            <person name="Schmitz R.A."/>
            <person name="Broughton W.J."/>
            <person name="Perret X."/>
            <person name="Strittmatter A.W."/>
            <person name="Streit W.R."/>
        </authorList>
    </citation>
    <scope>NUCLEOTIDE SEQUENCE [LARGE SCALE GENOMIC DNA]</scope>
    <source>
        <strain>NBRC 101917 / NGR234</strain>
    </source>
</reference>
<organism>
    <name type="scientific">Sinorhizobium fredii (strain NBRC 101917 / NGR234)</name>
    <dbReference type="NCBI Taxonomy" id="394"/>
    <lineage>
        <taxon>Bacteria</taxon>
        <taxon>Pseudomonadati</taxon>
        <taxon>Pseudomonadota</taxon>
        <taxon>Alphaproteobacteria</taxon>
        <taxon>Hyphomicrobiales</taxon>
        <taxon>Rhizobiaceae</taxon>
        <taxon>Sinorhizobium/Ensifer group</taxon>
        <taxon>Sinorhizobium</taxon>
    </lineage>
</organism>
<proteinExistence type="predicted"/>